<dbReference type="EMBL" id="AE014133">
    <property type="protein sequence ID" value="AAN59407.1"/>
    <property type="molecule type" value="Genomic_DNA"/>
</dbReference>
<dbReference type="RefSeq" id="NP_722101.1">
    <property type="nucleotide sequence ID" value="NC_004350.2"/>
</dbReference>
<dbReference type="RefSeq" id="WP_002263683.1">
    <property type="nucleotide sequence ID" value="NC_004350.2"/>
</dbReference>
<dbReference type="SMR" id="Q8DSK2"/>
<dbReference type="STRING" id="210007.SMU_1780"/>
<dbReference type="DNASU" id="1028996"/>
<dbReference type="KEGG" id="smu:SMU_1780"/>
<dbReference type="PATRIC" id="fig|210007.7.peg.1588"/>
<dbReference type="eggNOG" id="COG2137">
    <property type="taxonomic scope" value="Bacteria"/>
</dbReference>
<dbReference type="HOGENOM" id="CLU_066607_4_0_9"/>
<dbReference type="OrthoDB" id="5421057at2"/>
<dbReference type="PhylomeDB" id="Q8DSK2"/>
<dbReference type="Proteomes" id="UP000002512">
    <property type="component" value="Chromosome"/>
</dbReference>
<dbReference type="GO" id="GO:0005737">
    <property type="term" value="C:cytoplasm"/>
    <property type="evidence" value="ECO:0007669"/>
    <property type="project" value="UniProtKB-SubCell"/>
</dbReference>
<dbReference type="GO" id="GO:0006282">
    <property type="term" value="P:regulation of DNA repair"/>
    <property type="evidence" value="ECO:0007669"/>
    <property type="project" value="UniProtKB-UniRule"/>
</dbReference>
<dbReference type="Gene3D" id="1.10.10.10">
    <property type="entry name" value="Winged helix-like DNA-binding domain superfamily/Winged helix DNA-binding domain"/>
    <property type="match status" value="4"/>
</dbReference>
<dbReference type="HAMAP" id="MF_01114">
    <property type="entry name" value="RecX"/>
    <property type="match status" value="1"/>
</dbReference>
<dbReference type="InterPro" id="IPR053926">
    <property type="entry name" value="RecX_HTH_1st"/>
</dbReference>
<dbReference type="InterPro" id="IPR053925">
    <property type="entry name" value="RecX_HTH_3rd"/>
</dbReference>
<dbReference type="InterPro" id="IPR003783">
    <property type="entry name" value="Regulatory_RecX"/>
</dbReference>
<dbReference type="InterPro" id="IPR036388">
    <property type="entry name" value="WH-like_DNA-bd_sf"/>
</dbReference>
<dbReference type="NCBIfam" id="NF010733">
    <property type="entry name" value="PRK14135.1"/>
    <property type="match status" value="1"/>
</dbReference>
<dbReference type="PANTHER" id="PTHR33602">
    <property type="entry name" value="REGULATORY PROTEIN RECX FAMILY PROTEIN"/>
    <property type="match status" value="1"/>
</dbReference>
<dbReference type="PANTHER" id="PTHR33602:SF1">
    <property type="entry name" value="REGULATORY PROTEIN RECX FAMILY PROTEIN"/>
    <property type="match status" value="1"/>
</dbReference>
<dbReference type="Pfam" id="PF21982">
    <property type="entry name" value="RecX_HTH1"/>
    <property type="match status" value="1"/>
</dbReference>
<dbReference type="Pfam" id="PF21981">
    <property type="entry name" value="RecX_HTH3"/>
    <property type="match status" value="1"/>
</dbReference>
<keyword id="KW-0963">Cytoplasm</keyword>
<keyword id="KW-1185">Reference proteome</keyword>
<feature type="chain" id="PRO_1000065214" description="Regulatory protein RecX">
    <location>
        <begin position="1"/>
        <end position="258"/>
    </location>
</feature>
<accession>Q8DSK2</accession>
<protein>
    <recommendedName>
        <fullName evidence="1">Regulatory protein RecX</fullName>
    </recommendedName>
</protein>
<name>RECX_STRMU</name>
<evidence type="ECO:0000255" key="1">
    <source>
        <dbReference type="HAMAP-Rule" id="MF_01114"/>
    </source>
</evidence>
<reference key="1">
    <citation type="journal article" date="2002" name="Proc. Natl. Acad. Sci. U.S.A.">
        <title>Genome sequence of Streptococcus mutans UA159, a cariogenic dental pathogen.</title>
        <authorList>
            <person name="Ajdic D.J."/>
            <person name="McShan W.M."/>
            <person name="McLaughlin R.E."/>
            <person name="Savic G."/>
            <person name="Chang J."/>
            <person name="Carson M.B."/>
            <person name="Primeaux C."/>
            <person name="Tian R."/>
            <person name="Kenton S."/>
            <person name="Jia H.G."/>
            <person name="Lin S.P."/>
            <person name="Qian Y."/>
            <person name="Li S."/>
            <person name="Zhu H."/>
            <person name="Najar F.Z."/>
            <person name="Lai H."/>
            <person name="White J."/>
            <person name="Roe B.A."/>
            <person name="Ferretti J.J."/>
        </authorList>
    </citation>
    <scope>NUCLEOTIDE SEQUENCE [LARGE SCALE GENOMIC DNA]</scope>
    <source>
        <strain>ATCC 700610 / UA159</strain>
    </source>
</reference>
<gene>
    <name evidence="1" type="primary">recX</name>
    <name type="ordered locus">SMU_1780</name>
</gene>
<comment type="function">
    <text evidence="1">Modulates RecA activity.</text>
</comment>
<comment type="subcellular location">
    <subcellularLocation>
        <location evidence="1">Cytoplasm</location>
    </subcellularLocation>
</comment>
<comment type="similarity">
    <text evidence="1">Belongs to the RecX family.</text>
</comment>
<organism>
    <name type="scientific">Streptococcus mutans serotype c (strain ATCC 700610 / UA159)</name>
    <dbReference type="NCBI Taxonomy" id="210007"/>
    <lineage>
        <taxon>Bacteria</taxon>
        <taxon>Bacillati</taxon>
        <taxon>Bacillota</taxon>
        <taxon>Bacilli</taxon>
        <taxon>Lactobacillales</taxon>
        <taxon>Streptococcaceae</taxon>
        <taxon>Streptococcus</taxon>
    </lineage>
</organism>
<sequence>MKITKIEKKKRLYLIEIDEAEHFYITEDTIVHFMLSKNKEILPEQLEEIKTFAQFSYGKNLALYYLSFKQRTEKEVKDYLIRHDINTTVISQILTQLKEEKWLDDSKYIDNILQQNLHSGDKGAFVLKQKLLQKGIESQLIEDMLKDFDFSSICIKTAQKLLKKYQSKLPKRALKDKLKQALTTKGFSYQEAQIALEDLDIENNSENEEELIYKELDKQYRKYSKKYENYELRQRLTQSLARKGFAFDAIKNALREYL</sequence>
<proteinExistence type="inferred from homology"/>